<organism>
    <name type="scientific">Cyanidioschyzon merolae (strain NIES-3377 / 10D)</name>
    <name type="common">Unicellular red alga</name>
    <dbReference type="NCBI Taxonomy" id="280699"/>
    <lineage>
        <taxon>Eukaryota</taxon>
        <taxon>Rhodophyta</taxon>
        <taxon>Bangiophyceae</taxon>
        <taxon>Cyanidiales</taxon>
        <taxon>Cyanidiaceae</taxon>
        <taxon>Cyanidioschyzon</taxon>
    </lineage>
</organism>
<protein>
    <recommendedName>
        <fullName evidence="1">Photosystem II reaction center protein Psb30</fullName>
    </recommendedName>
    <alternativeName>
        <fullName evidence="1">Photosystem II reaction center protein Ycf12</fullName>
    </alternativeName>
</protein>
<sequence>MNWHVLAQLTVLAFVIAVGPITLIWLSNKKDALL</sequence>
<proteinExistence type="inferred from homology"/>
<reference key="1">
    <citation type="journal article" date="2003" name="DNA Res.">
        <title>Complete sequence and analysis of the plastid genome of the unicellular red alga Cyanidioschyzon merolae.</title>
        <authorList>
            <person name="Ohta N."/>
            <person name="Matsuzaki M."/>
            <person name="Misumi O."/>
            <person name="Miyagishima S.-Y."/>
            <person name="Nozaki H."/>
            <person name="Tanaka K."/>
            <person name="Shin-i T."/>
            <person name="Kohara Y."/>
            <person name="Kuroiwa T."/>
        </authorList>
    </citation>
    <scope>NUCLEOTIDE SEQUENCE [LARGE SCALE GENOMIC DNA]</scope>
    <source>
        <strain>NIES-3377 / 10D</strain>
    </source>
</reference>
<dbReference type="EMBL" id="AB002583">
    <property type="protein sequence ID" value="BAC76099.1"/>
    <property type="molecule type" value="Genomic_DNA"/>
</dbReference>
<dbReference type="RefSeq" id="NP_848937.1">
    <property type="nucleotide sequence ID" value="NC_004799.1"/>
</dbReference>
<dbReference type="SMR" id="Q85G86"/>
<dbReference type="STRING" id="280699.Q85G86"/>
<dbReference type="EnsemblPlants" id="CMV003CT">
    <property type="protein sequence ID" value="CMV003CT"/>
    <property type="gene ID" value="CMV003C"/>
</dbReference>
<dbReference type="GeneID" id="845063"/>
<dbReference type="Gramene" id="CMV003CT">
    <property type="protein sequence ID" value="CMV003CT"/>
    <property type="gene ID" value="CMV003C"/>
</dbReference>
<dbReference type="KEGG" id="cme:CymeCp005"/>
<dbReference type="HOGENOM" id="CLU_3377737_0_0_1"/>
<dbReference type="Proteomes" id="UP000007014">
    <property type="component" value="Chloroplast"/>
</dbReference>
<dbReference type="GO" id="GO:0009535">
    <property type="term" value="C:chloroplast thylakoid membrane"/>
    <property type="evidence" value="ECO:0007669"/>
    <property type="project" value="UniProtKB-SubCell"/>
</dbReference>
<dbReference type="GO" id="GO:0009523">
    <property type="term" value="C:photosystem II"/>
    <property type="evidence" value="ECO:0007669"/>
    <property type="project" value="UniProtKB-KW"/>
</dbReference>
<dbReference type="GO" id="GO:0015979">
    <property type="term" value="P:photosynthesis"/>
    <property type="evidence" value="ECO:0007669"/>
    <property type="project" value="UniProtKB-KW"/>
</dbReference>
<dbReference type="HAMAP" id="MF_01329">
    <property type="entry name" value="PSII_Psb30_Ycf12"/>
    <property type="match status" value="1"/>
</dbReference>
<dbReference type="InterPro" id="IPR010284">
    <property type="entry name" value="PSII_Ycf12_core-subunit"/>
</dbReference>
<dbReference type="Pfam" id="PF05969">
    <property type="entry name" value="PSII_Ycf12"/>
    <property type="match status" value="1"/>
</dbReference>
<geneLocation type="chloroplast"/>
<accession>Q85G86</accession>
<feature type="chain" id="PRO_0000059016" description="Photosystem II reaction center protein Psb30">
    <location>
        <begin position="1"/>
        <end position="34"/>
    </location>
</feature>
<feature type="transmembrane region" description="Helical" evidence="1">
    <location>
        <begin position="5"/>
        <end position="25"/>
    </location>
</feature>
<comment type="function">
    <text evidence="1">A core subunit of photosystem II (PSII), probably helps stabilize the reaction center.</text>
</comment>
<comment type="subunit">
    <text evidence="1">PSII is composed of 1 copy each of membrane proteins PsbA, PsbB, PsbC, PsbD, PsbE, PsbF, PsbH, PsbI, PsbJ, PsbK, PsbL, PsbM, PsbT, PsbX, PsbY, PsbZ, Psb30/Ycf12, peripheral proteins of the oxygen-evolving complex and a large number of cofactors. It forms dimeric complexes.</text>
</comment>
<comment type="subcellular location">
    <subcellularLocation>
        <location evidence="1">Plastid</location>
        <location evidence="1">Chloroplast thylakoid membrane</location>
        <topology evidence="1">Single-pass membrane protein</topology>
    </subcellularLocation>
</comment>
<comment type="similarity">
    <text evidence="1">Belongs to the Psb30/Ycf12 family.</text>
</comment>
<evidence type="ECO:0000255" key="1">
    <source>
        <dbReference type="HAMAP-Rule" id="MF_01329"/>
    </source>
</evidence>
<keyword id="KW-0150">Chloroplast</keyword>
<keyword id="KW-0472">Membrane</keyword>
<keyword id="KW-0602">Photosynthesis</keyword>
<keyword id="KW-0604">Photosystem II</keyword>
<keyword id="KW-0934">Plastid</keyword>
<keyword id="KW-1185">Reference proteome</keyword>
<keyword id="KW-0793">Thylakoid</keyword>
<keyword id="KW-0812">Transmembrane</keyword>
<keyword id="KW-1133">Transmembrane helix</keyword>
<name>PSB30_CYAM1</name>
<gene>
    <name evidence="1" type="primary">psb30</name>
    <name evidence="1" type="synonym">ycf12</name>
</gene>